<sequence>MGIRPEEISSVLAEKIKNFDFSVETQEIGYVIQSGDGIARIYGLDNAVYGEMVEFESGVVGMVLNLEEDTVGVVVLGDPEKVKEGDVVKRTGRIMEVPVGKGLLGRVVNPLGEPIDGKGPIEYEGKRPIESPAPPIVRRQPVNTPLQTGILAIDSMIPIGRGQRELIIGDRQTGKTAIAVDTIINQKDKGVYCIYVAIGQKASTVASVVNTLEKYGAMEYTTVVAATASESAALQYIAPYAGCAMGEHFMYQGKDVLVVYDDLSKHAVAYRTLSLLLRRPPGREAYPGDVFYLHSRLLERSARLSDEYGGGSLTALPIVETQAGDISAYIPTNVISITDGQIYLESELFYSGIRPAINVGLSVSRVGGAAQIKAMKKVAGRLRLELSQYRELQVFARFGTDLDKATLEVLRQGERIVEITKQPQYQPMAVEDQVIAIYTVMNRYVTDIEVSEVRPFVMGLLKFLDEAYPEIKQSIRDTKDLTKETEEKLKAAILEYKEKYAAKGEK</sequence>
<reference key="1">
    <citation type="journal article" date="2002" name="Genome Res.">
        <title>A complete sequence of the T. tengcongensis genome.</title>
        <authorList>
            <person name="Bao Q."/>
            <person name="Tian Y."/>
            <person name="Li W."/>
            <person name="Xu Z."/>
            <person name="Xuan Z."/>
            <person name="Hu S."/>
            <person name="Dong W."/>
            <person name="Yang J."/>
            <person name="Chen Y."/>
            <person name="Xue Y."/>
            <person name="Xu Y."/>
            <person name="Lai X."/>
            <person name="Huang L."/>
            <person name="Dong X."/>
            <person name="Ma Y."/>
            <person name="Ling L."/>
            <person name="Tan H."/>
            <person name="Chen R."/>
            <person name="Wang J."/>
            <person name="Yu J."/>
            <person name="Yang H."/>
        </authorList>
    </citation>
    <scope>NUCLEOTIDE SEQUENCE [LARGE SCALE GENOMIC DNA]</scope>
    <source>
        <strain>DSM 15242 / JCM 11007 / NBRC 100824 / MB4</strain>
    </source>
</reference>
<feature type="chain" id="PRO_0000238385" description="ATP synthase subunit alpha">
    <location>
        <begin position="1"/>
        <end position="506"/>
    </location>
</feature>
<feature type="region of interest" description="Disordered" evidence="2">
    <location>
        <begin position="119"/>
        <end position="138"/>
    </location>
</feature>
<feature type="compositionally biased region" description="Basic and acidic residues" evidence="2">
    <location>
        <begin position="119"/>
        <end position="129"/>
    </location>
</feature>
<feature type="binding site" evidence="1">
    <location>
        <begin position="169"/>
        <end position="176"/>
    </location>
    <ligand>
        <name>ATP</name>
        <dbReference type="ChEBI" id="CHEBI:30616"/>
    </ligand>
</feature>
<feature type="site" description="Required for activity" evidence="1">
    <location>
        <position position="362"/>
    </location>
</feature>
<organism>
    <name type="scientific">Caldanaerobacter subterraneus subsp. tengcongensis (strain DSM 15242 / JCM 11007 / NBRC 100824 / MB4)</name>
    <name type="common">Thermoanaerobacter tengcongensis</name>
    <dbReference type="NCBI Taxonomy" id="273068"/>
    <lineage>
        <taxon>Bacteria</taxon>
        <taxon>Bacillati</taxon>
        <taxon>Bacillota</taxon>
        <taxon>Clostridia</taxon>
        <taxon>Thermoanaerobacterales</taxon>
        <taxon>Thermoanaerobacteraceae</taxon>
        <taxon>Caldanaerobacter</taxon>
    </lineage>
</organism>
<proteinExistence type="inferred from homology"/>
<gene>
    <name evidence="1" type="primary">atpA</name>
    <name type="ordered locus">TTE0635</name>
</gene>
<accession>Q8RC17</accession>
<name>ATPA_CALS4</name>
<evidence type="ECO:0000255" key="1">
    <source>
        <dbReference type="HAMAP-Rule" id="MF_01346"/>
    </source>
</evidence>
<evidence type="ECO:0000256" key="2">
    <source>
        <dbReference type="SAM" id="MobiDB-lite"/>
    </source>
</evidence>
<comment type="function">
    <text evidence="1">Produces ATP from ADP in the presence of a proton gradient across the membrane. The alpha chain is a regulatory subunit.</text>
</comment>
<comment type="catalytic activity">
    <reaction evidence="1">
        <text>ATP + H2O + 4 H(+)(in) = ADP + phosphate + 5 H(+)(out)</text>
        <dbReference type="Rhea" id="RHEA:57720"/>
        <dbReference type="ChEBI" id="CHEBI:15377"/>
        <dbReference type="ChEBI" id="CHEBI:15378"/>
        <dbReference type="ChEBI" id="CHEBI:30616"/>
        <dbReference type="ChEBI" id="CHEBI:43474"/>
        <dbReference type="ChEBI" id="CHEBI:456216"/>
        <dbReference type="EC" id="7.1.2.2"/>
    </reaction>
</comment>
<comment type="subunit">
    <text evidence="1">F-type ATPases have 2 components, CF(1) - the catalytic core - and CF(0) - the membrane proton channel. CF(1) has five subunits: alpha(3), beta(3), gamma(1), delta(1), epsilon(1). CF(0) has three main subunits: a(1), b(2) and c(9-12). The alpha and beta chains form an alternating ring which encloses part of the gamma chain. CF(1) is attached to CF(0) by a central stalk formed by the gamma and epsilon chains, while a peripheral stalk is formed by the delta and b chains.</text>
</comment>
<comment type="subcellular location">
    <subcellularLocation>
        <location evidence="1">Cell membrane</location>
        <topology evidence="1">Peripheral membrane protein</topology>
    </subcellularLocation>
</comment>
<comment type="similarity">
    <text evidence="1">Belongs to the ATPase alpha/beta chains family.</text>
</comment>
<protein>
    <recommendedName>
        <fullName evidence="1">ATP synthase subunit alpha</fullName>
        <ecNumber evidence="1">7.1.2.2</ecNumber>
    </recommendedName>
    <alternativeName>
        <fullName evidence="1">ATP synthase F1 sector subunit alpha</fullName>
    </alternativeName>
    <alternativeName>
        <fullName evidence="1">F-ATPase subunit alpha</fullName>
    </alternativeName>
</protein>
<keyword id="KW-0066">ATP synthesis</keyword>
<keyword id="KW-0067">ATP-binding</keyword>
<keyword id="KW-1003">Cell membrane</keyword>
<keyword id="KW-0139">CF(1)</keyword>
<keyword id="KW-0375">Hydrogen ion transport</keyword>
<keyword id="KW-0406">Ion transport</keyword>
<keyword id="KW-0472">Membrane</keyword>
<keyword id="KW-0547">Nucleotide-binding</keyword>
<keyword id="KW-1185">Reference proteome</keyword>
<keyword id="KW-1278">Translocase</keyword>
<keyword id="KW-0813">Transport</keyword>
<dbReference type="EC" id="7.1.2.2" evidence="1"/>
<dbReference type="EMBL" id="AE008691">
    <property type="protein sequence ID" value="AAM23903.1"/>
    <property type="molecule type" value="Genomic_DNA"/>
</dbReference>
<dbReference type="RefSeq" id="WP_009610842.1">
    <property type="nucleotide sequence ID" value="NC_003869.1"/>
</dbReference>
<dbReference type="SMR" id="Q8RC17"/>
<dbReference type="STRING" id="273068.TTE0635"/>
<dbReference type="KEGG" id="tte:TTE0635"/>
<dbReference type="eggNOG" id="COG0056">
    <property type="taxonomic scope" value="Bacteria"/>
</dbReference>
<dbReference type="HOGENOM" id="CLU_010091_2_1_9"/>
<dbReference type="OrthoDB" id="9803053at2"/>
<dbReference type="Proteomes" id="UP000000555">
    <property type="component" value="Chromosome"/>
</dbReference>
<dbReference type="GO" id="GO:0005886">
    <property type="term" value="C:plasma membrane"/>
    <property type="evidence" value="ECO:0007669"/>
    <property type="project" value="UniProtKB-SubCell"/>
</dbReference>
<dbReference type="GO" id="GO:0045259">
    <property type="term" value="C:proton-transporting ATP synthase complex"/>
    <property type="evidence" value="ECO:0007669"/>
    <property type="project" value="UniProtKB-KW"/>
</dbReference>
<dbReference type="GO" id="GO:0043531">
    <property type="term" value="F:ADP binding"/>
    <property type="evidence" value="ECO:0007669"/>
    <property type="project" value="TreeGrafter"/>
</dbReference>
<dbReference type="GO" id="GO:0005524">
    <property type="term" value="F:ATP binding"/>
    <property type="evidence" value="ECO:0007669"/>
    <property type="project" value="UniProtKB-UniRule"/>
</dbReference>
<dbReference type="GO" id="GO:0046933">
    <property type="term" value="F:proton-transporting ATP synthase activity, rotational mechanism"/>
    <property type="evidence" value="ECO:0007669"/>
    <property type="project" value="UniProtKB-UniRule"/>
</dbReference>
<dbReference type="CDD" id="cd18113">
    <property type="entry name" value="ATP-synt_F1_alpha_C"/>
    <property type="match status" value="1"/>
</dbReference>
<dbReference type="CDD" id="cd18116">
    <property type="entry name" value="ATP-synt_F1_alpha_N"/>
    <property type="match status" value="1"/>
</dbReference>
<dbReference type="CDD" id="cd01132">
    <property type="entry name" value="F1-ATPase_alpha_CD"/>
    <property type="match status" value="1"/>
</dbReference>
<dbReference type="FunFam" id="1.20.150.20:FF:000001">
    <property type="entry name" value="ATP synthase subunit alpha"/>
    <property type="match status" value="1"/>
</dbReference>
<dbReference type="FunFam" id="2.40.30.20:FF:000001">
    <property type="entry name" value="ATP synthase subunit alpha"/>
    <property type="match status" value="1"/>
</dbReference>
<dbReference type="FunFam" id="3.40.50.300:FF:000002">
    <property type="entry name" value="ATP synthase subunit alpha"/>
    <property type="match status" value="1"/>
</dbReference>
<dbReference type="Gene3D" id="2.40.30.20">
    <property type="match status" value="1"/>
</dbReference>
<dbReference type="Gene3D" id="1.20.150.20">
    <property type="entry name" value="ATP synthase alpha/beta chain, C-terminal domain"/>
    <property type="match status" value="1"/>
</dbReference>
<dbReference type="Gene3D" id="3.40.50.300">
    <property type="entry name" value="P-loop containing nucleotide triphosphate hydrolases"/>
    <property type="match status" value="1"/>
</dbReference>
<dbReference type="HAMAP" id="MF_01346">
    <property type="entry name" value="ATP_synth_alpha_bact"/>
    <property type="match status" value="1"/>
</dbReference>
<dbReference type="InterPro" id="IPR023366">
    <property type="entry name" value="ATP_synth_asu-like_sf"/>
</dbReference>
<dbReference type="InterPro" id="IPR000793">
    <property type="entry name" value="ATP_synth_asu_C"/>
</dbReference>
<dbReference type="InterPro" id="IPR038376">
    <property type="entry name" value="ATP_synth_asu_C_sf"/>
</dbReference>
<dbReference type="InterPro" id="IPR033732">
    <property type="entry name" value="ATP_synth_F1_a_nt-bd_dom"/>
</dbReference>
<dbReference type="InterPro" id="IPR005294">
    <property type="entry name" value="ATP_synth_F1_asu"/>
</dbReference>
<dbReference type="InterPro" id="IPR020003">
    <property type="entry name" value="ATPase_a/bsu_AS"/>
</dbReference>
<dbReference type="InterPro" id="IPR004100">
    <property type="entry name" value="ATPase_F1/V1/A1_a/bsu_N"/>
</dbReference>
<dbReference type="InterPro" id="IPR036121">
    <property type="entry name" value="ATPase_F1/V1/A1_a/bsu_N_sf"/>
</dbReference>
<dbReference type="InterPro" id="IPR000194">
    <property type="entry name" value="ATPase_F1/V1/A1_a/bsu_nucl-bd"/>
</dbReference>
<dbReference type="InterPro" id="IPR027417">
    <property type="entry name" value="P-loop_NTPase"/>
</dbReference>
<dbReference type="NCBIfam" id="TIGR00962">
    <property type="entry name" value="atpA"/>
    <property type="match status" value="1"/>
</dbReference>
<dbReference type="NCBIfam" id="NF009884">
    <property type="entry name" value="PRK13343.1"/>
    <property type="match status" value="1"/>
</dbReference>
<dbReference type="PANTHER" id="PTHR48082">
    <property type="entry name" value="ATP SYNTHASE SUBUNIT ALPHA, MITOCHONDRIAL"/>
    <property type="match status" value="1"/>
</dbReference>
<dbReference type="PANTHER" id="PTHR48082:SF2">
    <property type="entry name" value="ATP SYNTHASE SUBUNIT ALPHA, MITOCHONDRIAL"/>
    <property type="match status" value="1"/>
</dbReference>
<dbReference type="Pfam" id="PF00006">
    <property type="entry name" value="ATP-synt_ab"/>
    <property type="match status" value="1"/>
</dbReference>
<dbReference type="Pfam" id="PF00306">
    <property type="entry name" value="ATP-synt_ab_C"/>
    <property type="match status" value="1"/>
</dbReference>
<dbReference type="Pfam" id="PF02874">
    <property type="entry name" value="ATP-synt_ab_N"/>
    <property type="match status" value="1"/>
</dbReference>
<dbReference type="PIRSF" id="PIRSF039088">
    <property type="entry name" value="F_ATPase_subunit_alpha"/>
    <property type="match status" value="1"/>
</dbReference>
<dbReference type="SUPFAM" id="SSF47917">
    <property type="entry name" value="C-terminal domain of alpha and beta subunits of F1 ATP synthase"/>
    <property type="match status" value="1"/>
</dbReference>
<dbReference type="SUPFAM" id="SSF50615">
    <property type="entry name" value="N-terminal domain of alpha and beta subunits of F1 ATP synthase"/>
    <property type="match status" value="1"/>
</dbReference>
<dbReference type="SUPFAM" id="SSF52540">
    <property type="entry name" value="P-loop containing nucleoside triphosphate hydrolases"/>
    <property type="match status" value="1"/>
</dbReference>
<dbReference type="PROSITE" id="PS00152">
    <property type="entry name" value="ATPASE_ALPHA_BETA"/>
    <property type="match status" value="1"/>
</dbReference>